<keyword id="KW-0963">Cytoplasm</keyword>
<keyword id="KW-0251">Elongation factor</keyword>
<keyword id="KW-0342">GTP-binding</keyword>
<keyword id="KW-0378">Hydrolase</keyword>
<keyword id="KW-0460">Magnesium</keyword>
<keyword id="KW-0479">Metal-binding</keyword>
<keyword id="KW-0547">Nucleotide-binding</keyword>
<keyword id="KW-0648">Protein biosynthesis</keyword>
<keyword id="KW-1185">Reference proteome</keyword>
<name>EFTU1_YERPE</name>
<comment type="function">
    <text evidence="2">GTP hydrolase that promotes the GTP-dependent binding of aminoacyl-tRNA to the A-site of ribosomes during protein biosynthesis.</text>
</comment>
<comment type="catalytic activity">
    <reaction evidence="2">
        <text>GTP + H2O = GDP + phosphate + H(+)</text>
        <dbReference type="Rhea" id="RHEA:19669"/>
        <dbReference type="ChEBI" id="CHEBI:15377"/>
        <dbReference type="ChEBI" id="CHEBI:15378"/>
        <dbReference type="ChEBI" id="CHEBI:37565"/>
        <dbReference type="ChEBI" id="CHEBI:43474"/>
        <dbReference type="ChEBI" id="CHEBI:58189"/>
        <dbReference type="EC" id="3.6.5.3"/>
    </reaction>
    <physiologicalReaction direction="left-to-right" evidence="2">
        <dbReference type="Rhea" id="RHEA:19670"/>
    </physiologicalReaction>
</comment>
<comment type="subunit">
    <text evidence="2">Monomer.</text>
</comment>
<comment type="subcellular location">
    <subcellularLocation>
        <location evidence="2">Cytoplasm</location>
    </subcellularLocation>
</comment>
<comment type="similarity">
    <text evidence="2">Belongs to the TRAFAC class translation factor GTPase superfamily. Classic translation factor GTPase family. EF-Tu/EF-1A subfamily.</text>
</comment>
<protein>
    <recommendedName>
        <fullName evidence="2">Elongation factor Tu-A</fullName>
        <shortName evidence="2">EF-Tu-A</shortName>
        <ecNumber evidence="2">3.6.5.3</ecNumber>
    </recommendedName>
</protein>
<dbReference type="EC" id="3.6.5.3" evidence="2"/>
<dbReference type="EMBL" id="AL590842">
    <property type="protein sequence ID" value="CAL18887.1"/>
    <property type="molecule type" value="Genomic_DNA"/>
</dbReference>
<dbReference type="EMBL" id="AE009952">
    <property type="protein sequence ID" value="AAM87530.1"/>
    <property type="molecule type" value="Genomic_DNA"/>
</dbReference>
<dbReference type="EMBL" id="AE017042">
    <property type="protein sequence ID" value="AAS60478.1"/>
    <property type="molecule type" value="Genomic_DNA"/>
</dbReference>
<dbReference type="PIR" id="AE0025">
    <property type="entry name" value="AE0025"/>
</dbReference>
<dbReference type="RefSeq" id="YP_002345285.1">
    <property type="nucleotide sequence ID" value="NC_003143.1"/>
</dbReference>
<dbReference type="SMR" id="Q8ZJB2"/>
<dbReference type="STRING" id="214092.YPO0203"/>
<dbReference type="PaxDb" id="214092-YPO0203"/>
<dbReference type="DNASU" id="1148933"/>
<dbReference type="EnsemblBacteria" id="AAS60478">
    <property type="protein sequence ID" value="AAS60478"/>
    <property type="gene ID" value="YP_0202"/>
</dbReference>
<dbReference type="KEGG" id="ype:YPO0203"/>
<dbReference type="KEGG" id="ypk:y3986"/>
<dbReference type="KEGG" id="ypm:YP_0202"/>
<dbReference type="PATRIC" id="fig|214092.21.peg.435"/>
<dbReference type="eggNOG" id="COG0050">
    <property type="taxonomic scope" value="Bacteria"/>
</dbReference>
<dbReference type="HOGENOM" id="CLU_007265_0_2_6"/>
<dbReference type="OMA" id="EGDKEWG"/>
<dbReference type="OrthoDB" id="9803139at2"/>
<dbReference type="Proteomes" id="UP000000815">
    <property type="component" value="Chromosome"/>
</dbReference>
<dbReference type="Proteomes" id="UP000001019">
    <property type="component" value="Chromosome"/>
</dbReference>
<dbReference type="Proteomes" id="UP000002490">
    <property type="component" value="Chromosome"/>
</dbReference>
<dbReference type="GO" id="GO:0005737">
    <property type="term" value="C:cytoplasm"/>
    <property type="evidence" value="ECO:0007669"/>
    <property type="project" value="UniProtKB-SubCell"/>
</dbReference>
<dbReference type="GO" id="GO:0005525">
    <property type="term" value="F:GTP binding"/>
    <property type="evidence" value="ECO:0007669"/>
    <property type="project" value="UniProtKB-UniRule"/>
</dbReference>
<dbReference type="GO" id="GO:0003924">
    <property type="term" value="F:GTPase activity"/>
    <property type="evidence" value="ECO:0007669"/>
    <property type="project" value="InterPro"/>
</dbReference>
<dbReference type="GO" id="GO:0097216">
    <property type="term" value="F:guanosine tetraphosphate binding"/>
    <property type="evidence" value="ECO:0007669"/>
    <property type="project" value="UniProtKB-ARBA"/>
</dbReference>
<dbReference type="GO" id="GO:0003746">
    <property type="term" value="F:translation elongation factor activity"/>
    <property type="evidence" value="ECO:0000318"/>
    <property type="project" value="GO_Central"/>
</dbReference>
<dbReference type="GO" id="GO:0006414">
    <property type="term" value="P:translational elongation"/>
    <property type="evidence" value="ECO:0000318"/>
    <property type="project" value="GO_Central"/>
</dbReference>
<dbReference type="CDD" id="cd01884">
    <property type="entry name" value="EF_Tu"/>
    <property type="match status" value="1"/>
</dbReference>
<dbReference type="CDD" id="cd03697">
    <property type="entry name" value="EFTU_II"/>
    <property type="match status" value="1"/>
</dbReference>
<dbReference type="CDD" id="cd03707">
    <property type="entry name" value="EFTU_III"/>
    <property type="match status" value="1"/>
</dbReference>
<dbReference type="FunFam" id="2.40.30.10:FF:000001">
    <property type="entry name" value="Elongation factor Tu"/>
    <property type="match status" value="1"/>
</dbReference>
<dbReference type="FunFam" id="3.40.50.300:FF:000003">
    <property type="entry name" value="Elongation factor Tu"/>
    <property type="match status" value="1"/>
</dbReference>
<dbReference type="Gene3D" id="3.40.50.300">
    <property type="entry name" value="P-loop containing nucleotide triphosphate hydrolases"/>
    <property type="match status" value="1"/>
</dbReference>
<dbReference type="Gene3D" id="2.40.30.10">
    <property type="entry name" value="Translation factors"/>
    <property type="match status" value="2"/>
</dbReference>
<dbReference type="HAMAP" id="MF_00118_B">
    <property type="entry name" value="EF_Tu_B"/>
    <property type="match status" value="1"/>
</dbReference>
<dbReference type="InterPro" id="IPR041709">
    <property type="entry name" value="EF-Tu_GTP-bd"/>
</dbReference>
<dbReference type="InterPro" id="IPR050055">
    <property type="entry name" value="EF-Tu_GTPase"/>
</dbReference>
<dbReference type="InterPro" id="IPR004161">
    <property type="entry name" value="EFTu-like_2"/>
</dbReference>
<dbReference type="InterPro" id="IPR033720">
    <property type="entry name" value="EFTU_2"/>
</dbReference>
<dbReference type="InterPro" id="IPR031157">
    <property type="entry name" value="G_TR_CS"/>
</dbReference>
<dbReference type="InterPro" id="IPR027417">
    <property type="entry name" value="P-loop_NTPase"/>
</dbReference>
<dbReference type="InterPro" id="IPR005225">
    <property type="entry name" value="Small_GTP-bd"/>
</dbReference>
<dbReference type="InterPro" id="IPR000795">
    <property type="entry name" value="T_Tr_GTP-bd_dom"/>
</dbReference>
<dbReference type="InterPro" id="IPR009000">
    <property type="entry name" value="Transl_B-barrel_sf"/>
</dbReference>
<dbReference type="InterPro" id="IPR009001">
    <property type="entry name" value="Transl_elong_EF1A/Init_IF2_C"/>
</dbReference>
<dbReference type="InterPro" id="IPR004541">
    <property type="entry name" value="Transl_elong_EFTu/EF1A_bac/org"/>
</dbReference>
<dbReference type="InterPro" id="IPR004160">
    <property type="entry name" value="Transl_elong_EFTu/EF1A_C"/>
</dbReference>
<dbReference type="NCBIfam" id="TIGR00485">
    <property type="entry name" value="EF-Tu"/>
    <property type="match status" value="1"/>
</dbReference>
<dbReference type="NCBIfam" id="NF000766">
    <property type="entry name" value="PRK00049.1"/>
    <property type="match status" value="1"/>
</dbReference>
<dbReference type="NCBIfam" id="NF009372">
    <property type="entry name" value="PRK12735.1"/>
    <property type="match status" value="1"/>
</dbReference>
<dbReference type="NCBIfam" id="NF009373">
    <property type="entry name" value="PRK12736.1"/>
    <property type="match status" value="1"/>
</dbReference>
<dbReference type="NCBIfam" id="TIGR00231">
    <property type="entry name" value="small_GTP"/>
    <property type="match status" value="1"/>
</dbReference>
<dbReference type="PANTHER" id="PTHR43721:SF22">
    <property type="entry name" value="ELONGATION FACTOR TU, MITOCHONDRIAL"/>
    <property type="match status" value="1"/>
</dbReference>
<dbReference type="PANTHER" id="PTHR43721">
    <property type="entry name" value="ELONGATION FACTOR TU-RELATED"/>
    <property type="match status" value="1"/>
</dbReference>
<dbReference type="Pfam" id="PF00009">
    <property type="entry name" value="GTP_EFTU"/>
    <property type="match status" value="1"/>
</dbReference>
<dbReference type="Pfam" id="PF03144">
    <property type="entry name" value="GTP_EFTU_D2"/>
    <property type="match status" value="1"/>
</dbReference>
<dbReference type="Pfam" id="PF03143">
    <property type="entry name" value="GTP_EFTU_D3"/>
    <property type="match status" value="1"/>
</dbReference>
<dbReference type="PRINTS" id="PR00315">
    <property type="entry name" value="ELONGATNFCT"/>
</dbReference>
<dbReference type="SUPFAM" id="SSF50465">
    <property type="entry name" value="EF-Tu/eEF-1alpha/eIF2-gamma C-terminal domain"/>
    <property type="match status" value="1"/>
</dbReference>
<dbReference type="SUPFAM" id="SSF52540">
    <property type="entry name" value="P-loop containing nucleoside triphosphate hydrolases"/>
    <property type="match status" value="1"/>
</dbReference>
<dbReference type="SUPFAM" id="SSF50447">
    <property type="entry name" value="Translation proteins"/>
    <property type="match status" value="1"/>
</dbReference>
<dbReference type="PROSITE" id="PS00301">
    <property type="entry name" value="G_TR_1"/>
    <property type="match status" value="1"/>
</dbReference>
<dbReference type="PROSITE" id="PS51722">
    <property type="entry name" value="G_TR_2"/>
    <property type="match status" value="1"/>
</dbReference>
<accession>Q8ZJB2</accession>
<accession>Q0WKA3</accession>
<evidence type="ECO:0000250" key="1"/>
<evidence type="ECO:0000255" key="2">
    <source>
        <dbReference type="HAMAP-Rule" id="MF_00118"/>
    </source>
</evidence>
<sequence length="394" mass="43160">MSKEKFERTKPHVNVGTIGHVDHGKTTLTAAITTVLAKTYGGSARAFDQIDNAPEEKARGITINTSHVEYDTPARHYAHVDCPGHADYVKNMITGAAQMDGAILVVAATDGPMPQTREHILLGRQVGVPYIIVFMNKCDMVDDEELLELVEMEVRELLSAYDFPGDDLPVVRGSALKALEGEAEWEAKIIELAGYLDSYIPEPERAIDKPFLLPIEDVFSISGRGTVVTGRVERGIVKVGEEVEIVGIKDTVKSTCTGVEMFRKLLDEGRAGENVGVLLRGIKREDIERGQVLAKPGSIKPHTTFESEVYILSKDEGGRHTPFFKGYRPQFYFRTTDVTGTIELPEGVEMVMPGDNINMIVTLIHPIAMDDGLRFAIREGGRTVGAGVVAKVIA</sequence>
<gene>
    <name evidence="2" type="primary">tufA</name>
    <name type="ordered locus">YPO0203</name>
    <name type="ordered locus">y3986</name>
    <name type="ordered locus">YP_0202</name>
</gene>
<reference key="1">
    <citation type="journal article" date="2001" name="Nature">
        <title>Genome sequence of Yersinia pestis, the causative agent of plague.</title>
        <authorList>
            <person name="Parkhill J."/>
            <person name="Wren B.W."/>
            <person name="Thomson N.R."/>
            <person name="Titball R.W."/>
            <person name="Holden M.T.G."/>
            <person name="Prentice M.B."/>
            <person name="Sebaihia M."/>
            <person name="James K.D."/>
            <person name="Churcher C.M."/>
            <person name="Mungall K.L."/>
            <person name="Baker S."/>
            <person name="Basham D."/>
            <person name="Bentley S.D."/>
            <person name="Brooks K."/>
            <person name="Cerdeno-Tarraga A.-M."/>
            <person name="Chillingworth T."/>
            <person name="Cronin A."/>
            <person name="Davies R.M."/>
            <person name="Davis P."/>
            <person name="Dougan G."/>
            <person name="Feltwell T."/>
            <person name="Hamlin N."/>
            <person name="Holroyd S."/>
            <person name="Jagels K."/>
            <person name="Karlyshev A.V."/>
            <person name="Leather S."/>
            <person name="Moule S."/>
            <person name="Oyston P.C.F."/>
            <person name="Quail M.A."/>
            <person name="Rutherford K.M."/>
            <person name="Simmonds M."/>
            <person name="Skelton J."/>
            <person name="Stevens K."/>
            <person name="Whitehead S."/>
            <person name="Barrell B.G."/>
        </authorList>
    </citation>
    <scope>NUCLEOTIDE SEQUENCE [LARGE SCALE GENOMIC DNA]</scope>
    <source>
        <strain>CO-92 / Biovar Orientalis</strain>
    </source>
</reference>
<reference key="2">
    <citation type="journal article" date="2002" name="J. Bacteriol.">
        <title>Genome sequence of Yersinia pestis KIM.</title>
        <authorList>
            <person name="Deng W."/>
            <person name="Burland V."/>
            <person name="Plunkett G. III"/>
            <person name="Boutin A."/>
            <person name="Mayhew G.F."/>
            <person name="Liss P."/>
            <person name="Perna N.T."/>
            <person name="Rose D.J."/>
            <person name="Mau B."/>
            <person name="Zhou S."/>
            <person name="Schwartz D.C."/>
            <person name="Fetherston J.D."/>
            <person name="Lindler L.E."/>
            <person name="Brubaker R.R."/>
            <person name="Plano G.V."/>
            <person name="Straley S.C."/>
            <person name="McDonough K.A."/>
            <person name="Nilles M.L."/>
            <person name="Matson J.S."/>
            <person name="Blattner F.R."/>
            <person name="Perry R.D."/>
        </authorList>
    </citation>
    <scope>NUCLEOTIDE SEQUENCE [LARGE SCALE GENOMIC DNA]</scope>
    <source>
        <strain>KIM10+ / Biovar Mediaevalis</strain>
    </source>
</reference>
<reference key="3">
    <citation type="journal article" date="2004" name="DNA Res.">
        <title>Complete genome sequence of Yersinia pestis strain 91001, an isolate avirulent to humans.</title>
        <authorList>
            <person name="Song Y."/>
            <person name="Tong Z."/>
            <person name="Wang J."/>
            <person name="Wang L."/>
            <person name="Guo Z."/>
            <person name="Han Y."/>
            <person name="Zhang J."/>
            <person name="Pei D."/>
            <person name="Zhou D."/>
            <person name="Qin H."/>
            <person name="Pang X."/>
            <person name="Han Y."/>
            <person name="Zhai J."/>
            <person name="Li M."/>
            <person name="Cui B."/>
            <person name="Qi Z."/>
            <person name="Jin L."/>
            <person name="Dai R."/>
            <person name="Chen F."/>
            <person name="Li S."/>
            <person name="Ye C."/>
            <person name="Du Z."/>
            <person name="Lin W."/>
            <person name="Wang J."/>
            <person name="Yu J."/>
            <person name="Yang H."/>
            <person name="Wang J."/>
            <person name="Huang P."/>
            <person name="Yang R."/>
        </authorList>
    </citation>
    <scope>NUCLEOTIDE SEQUENCE [LARGE SCALE GENOMIC DNA]</scope>
    <source>
        <strain>91001 / Biovar Mediaevalis</strain>
    </source>
</reference>
<proteinExistence type="inferred from homology"/>
<organism>
    <name type="scientific">Yersinia pestis</name>
    <dbReference type="NCBI Taxonomy" id="632"/>
    <lineage>
        <taxon>Bacteria</taxon>
        <taxon>Pseudomonadati</taxon>
        <taxon>Pseudomonadota</taxon>
        <taxon>Gammaproteobacteria</taxon>
        <taxon>Enterobacterales</taxon>
        <taxon>Yersiniaceae</taxon>
        <taxon>Yersinia</taxon>
    </lineage>
</organism>
<feature type="chain" id="PRO_0000091443" description="Elongation factor Tu-A">
    <location>
        <begin position="1"/>
        <end position="394"/>
    </location>
</feature>
<feature type="domain" description="tr-type G">
    <location>
        <begin position="10"/>
        <end position="204"/>
    </location>
</feature>
<feature type="region of interest" description="G1" evidence="1">
    <location>
        <begin position="19"/>
        <end position="26"/>
    </location>
</feature>
<feature type="region of interest" description="G2" evidence="1">
    <location>
        <begin position="60"/>
        <end position="64"/>
    </location>
</feature>
<feature type="region of interest" description="G3" evidence="1">
    <location>
        <begin position="81"/>
        <end position="84"/>
    </location>
</feature>
<feature type="region of interest" description="G4" evidence="1">
    <location>
        <begin position="136"/>
        <end position="139"/>
    </location>
</feature>
<feature type="region of interest" description="G5" evidence="1">
    <location>
        <begin position="174"/>
        <end position="176"/>
    </location>
</feature>
<feature type="binding site" evidence="2">
    <location>
        <begin position="19"/>
        <end position="26"/>
    </location>
    <ligand>
        <name>GTP</name>
        <dbReference type="ChEBI" id="CHEBI:37565"/>
    </ligand>
</feature>
<feature type="binding site" evidence="2">
    <location>
        <position position="26"/>
    </location>
    <ligand>
        <name>Mg(2+)</name>
        <dbReference type="ChEBI" id="CHEBI:18420"/>
    </ligand>
</feature>
<feature type="binding site" evidence="2">
    <location>
        <begin position="81"/>
        <end position="85"/>
    </location>
    <ligand>
        <name>GTP</name>
        <dbReference type="ChEBI" id="CHEBI:37565"/>
    </ligand>
</feature>
<feature type="binding site" evidence="2">
    <location>
        <begin position="136"/>
        <end position="139"/>
    </location>
    <ligand>
        <name>GTP</name>
        <dbReference type="ChEBI" id="CHEBI:37565"/>
    </ligand>
</feature>